<dbReference type="EC" id="3.1.26.4" evidence="1"/>
<dbReference type="EMBL" id="AE015925">
    <property type="protein sequence ID" value="AAP05042.1"/>
    <property type="molecule type" value="Genomic_DNA"/>
</dbReference>
<dbReference type="RefSeq" id="WP_011006260.1">
    <property type="nucleotide sequence ID" value="NC_003361.3"/>
</dbReference>
<dbReference type="SMR" id="Q823W2"/>
<dbReference type="STRING" id="227941.CCA_00293"/>
<dbReference type="KEGG" id="cca:CCA_00293"/>
<dbReference type="eggNOG" id="COG1039">
    <property type="taxonomic scope" value="Bacteria"/>
</dbReference>
<dbReference type="HOGENOM" id="CLU_059546_0_0_0"/>
<dbReference type="OrthoDB" id="9777935at2"/>
<dbReference type="Proteomes" id="UP000002193">
    <property type="component" value="Chromosome"/>
</dbReference>
<dbReference type="GO" id="GO:0005737">
    <property type="term" value="C:cytoplasm"/>
    <property type="evidence" value="ECO:0007669"/>
    <property type="project" value="UniProtKB-SubCell"/>
</dbReference>
<dbReference type="GO" id="GO:0032299">
    <property type="term" value="C:ribonuclease H2 complex"/>
    <property type="evidence" value="ECO:0007669"/>
    <property type="project" value="TreeGrafter"/>
</dbReference>
<dbReference type="GO" id="GO:0000287">
    <property type="term" value="F:magnesium ion binding"/>
    <property type="evidence" value="ECO:0007669"/>
    <property type="project" value="UniProtKB-UniRule"/>
</dbReference>
<dbReference type="GO" id="GO:0003723">
    <property type="term" value="F:RNA binding"/>
    <property type="evidence" value="ECO:0007669"/>
    <property type="project" value="InterPro"/>
</dbReference>
<dbReference type="GO" id="GO:0004523">
    <property type="term" value="F:RNA-DNA hybrid ribonuclease activity"/>
    <property type="evidence" value="ECO:0007669"/>
    <property type="project" value="UniProtKB-UniRule"/>
</dbReference>
<dbReference type="GO" id="GO:0043137">
    <property type="term" value="P:DNA replication, removal of RNA primer"/>
    <property type="evidence" value="ECO:0007669"/>
    <property type="project" value="TreeGrafter"/>
</dbReference>
<dbReference type="GO" id="GO:0006298">
    <property type="term" value="P:mismatch repair"/>
    <property type="evidence" value="ECO:0007669"/>
    <property type="project" value="TreeGrafter"/>
</dbReference>
<dbReference type="CDD" id="cd06590">
    <property type="entry name" value="RNase_HII_bacteria_HIII_like"/>
    <property type="match status" value="1"/>
</dbReference>
<dbReference type="CDD" id="cd14796">
    <property type="entry name" value="RNAse_HIII_N"/>
    <property type="match status" value="1"/>
</dbReference>
<dbReference type="Gene3D" id="3.30.420.10">
    <property type="entry name" value="Ribonuclease H-like superfamily/Ribonuclease H"/>
    <property type="match status" value="1"/>
</dbReference>
<dbReference type="Gene3D" id="3.30.310.10">
    <property type="entry name" value="TATA-Binding Protein"/>
    <property type="match status" value="1"/>
</dbReference>
<dbReference type="HAMAP" id="MF_00053">
    <property type="entry name" value="RNase_HIII"/>
    <property type="match status" value="1"/>
</dbReference>
<dbReference type="InterPro" id="IPR001352">
    <property type="entry name" value="RNase_HII/HIII"/>
</dbReference>
<dbReference type="InterPro" id="IPR024567">
    <property type="entry name" value="RNase_HII/HIII_dom"/>
</dbReference>
<dbReference type="InterPro" id="IPR004641">
    <property type="entry name" value="RNase_HIII"/>
</dbReference>
<dbReference type="InterPro" id="IPR024568">
    <property type="entry name" value="RNase_HIII_N"/>
</dbReference>
<dbReference type="InterPro" id="IPR012337">
    <property type="entry name" value="RNaseH-like_sf"/>
</dbReference>
<dbReference type="InterPro" id="IPR036397">
    <property type="entry name" value="RNaseH_sf"/>
</dbReference>
<dbReference type="InterPro" id="IPR012295">
    <property type="entry name" value="TBP_dom_sf"/>
</dbReference>
<dbReference type="NCBIfam" id="TIGR00716">
    <property type="entry name" value="rnhC"/>
    <property type="match status" value="1"/>
</dbReference>
<dbReference type="PANTHER" id="PTHR10954:SF23">
    <property type="entry name" value="RIBONUCLEASE"/>
    <property type="match status" value="1"/>
</dbReference>
<dbReference type="PANTHER" id="PTHR10954">
    <property type="entry name" value="RIBONUCLEASE H2 SUBUNIT A"/>
    <property type="match status" value="1"/>
</dbReference>
<dbReference type="Pfam" id="PF11858">
    <property type="entry name" value="DUF3378"/>
    <property type="match status" value="1"/>
</dbReference>
<dbReference type="Pfam" id="PF01351">
    <property type="entry name" value="RNase_HII"/>
    <property type="match status" value="1"/>
</dbReference>
<dbReference type="PIRSF" id="PIRSF037748">
    <property type="entry name" value="RnhC"/>
    <property type="match status" value="1"/>
</dbReference>
<dbReference type="SUPFAM" id="SSF53098">
    <property type="entry name" value="Ribonuclease H-like"/>
    <property type="match status" value="1"/>
</dbReference>
<dbReference type="PROSITE" id="PS51975">
    <property type="entry name" value="RNASE_H_2"/>
    <property type="match status" value="1"/>
</dbReference>
<organism>
    <name type="scientific">Chlamydia caviae (strain ATCC VR-813 / DSM 19441 / 03DC25 / GPIC)</name>
    <name type="common">Chlamydophila caviae</name>
    <dbReference type="NCBI Taxonomy" id="227941"/>
    <lineage>
        <taxon>Bacteria</taxon>
        <taxon>Pseudomonadati</taxon>
        <taxon>Chlamydiota</taxon>
        <taxon>Chlamydiia</taxon>
        <taxon>Chlamydiales</taxon>
        <taxon>Chlamydiaceae</taxon>
        <taxon>Chlamydia/Chlamydophila group</taxon>
        <taxon>Chlamydia</taxon>
    </lineage>
</organism>
<name>RNH3_CHLCV</name>
<keyword id="KW-0963">Cytoplasm</keyword>
<keyword id="KW-0255">Endonuclease</keyword>
<keyword id="KW-0378">Hydrolase</keyword>
<keyword id="KW-0460">Magnesium</keyword>
<keyword id="KW-0479">Metal-binding</keyword>
<keyword id="KW-0540">Nuclease</keyword>
<reference key="1">
    <citation type="journal article" date="2003" name="Nucleic Acids Res.">
        <title>Genome sequence of Chlamydophila caviae (Chlamydia psittaci GPIC): examining the role of niche-specific genes in the evolution of the Chlamydiaceae.</title>
        <authorList>
            <person name="Read T.D."/>
            <person name="Myers G.S.A."/>
            <person name="Brunham R.C."/>
            <person name="Nelson W.C."/>
            <person name="Paulsen I.T."/>
            <person name="Heidelberg J.F."/>
            <person name="Holtzapple E.K."/>
            <person name="Khouri H.M."/>
            <person name="Federova N.B."/>
            <person name="Carty H.A."/>
            <person name="Umayam L.A."/>
            <person name="Haft D.H."/>
            <person name="Peterson J.D."/>
            <person name="Beanan M.J."/>
            <person name="White O."/>
            <person name="Salzberg S.L."/>
            <person name="Hsia R.-C."/>
            <person name="McClarty G."/>
            <person name="Rank R.G."/>
            <person name="Bavoil P.M."/>
            <person name="Fraser C.M."/>
        </authorList>
    </citation>
    <scope>NUCLEOTIDE SEQUENCE [LARGE SCALE GENOMIC DNA]</scope>
    <source>
        <strain>ATCC VR-813 / DSM 19441 / 03DC25 / GPIC</strain>
    </source>
</reference>
<sequence length="300" mass="33256">MSTPFVTTLSPSLHGLLKDRLEEKGFILTQPQYTIFQARSPSVTCVLYSSGKLVVQGKGSKEFIKFFLEPEILLTFTHNRVEEDLRPRLGVDESGKGDFFGPLCIAGVYAKDEETLKNLYKTKIQDSKLLNDAQILSLAKTIRASCSCDVMILYPEKYNELYGKFHNLNILLAWAHATIIDQLAPRPSGEVFAISDQFASSESVLLNALRKKNTDISVIQKVRAEQDIVVAAASILAREAFITAMTKLEQRFSLKLPKGASAQVKSVGKSILNSRGKEVLSLICKTHFKTFNEICDSASA</sequence>
<proteinExistence type="inferred from homology"/>
<feature type="chain" id="PRO_0000111682" description="Ribonuclease HIII">
    <location>
        <begin position="1"/>
        <end position="300"/>
    </location>
</feature>
<feature type="domain" description="RNase H type-2" evidence="2">
    <location>
        <begin position="86"/>
        <end position="300"/>
    </location>
</feature>
<feature type="binding site" evidence="1">
    <location>
        <position position="92"/>
    </location>
    <ligand>
        <name>a divalent metal cation</name>
        <dbReference type="ChEBI" id="CHEBI:60240"/>
    </ligand>
</feature>
<feature type="binding site" evidence="1">
    <location>
        <position position="93"/>
    </location>
    <ligand>
        <name>a divalent metal cation</name>
        <dbReference type="ChEBI" id="CHEBI:60240"/>
    </ligand>
</feature>
<feature type="binding site" evidence="1">
    <location>
        <position position="196"/>
    </location>
    <ligand>
        <name>a divalent metal cation</name>
        <dbReference type="ChEBI" id="CHEBI:60240"/>
    </ligand>
</feature>
<comment type="function">
    <text evidence="1">Endonuclease that specifically degrades the RNA of RNA-DNA hybrids.</text>
</comment>
<comment type="catalytic activity">
    <reaction evidence="1">
        <text>Endonucleolytic cleavage to 5'-phosphomonoester.</text>
        <dbReference type="EC" id="3.1.26.4"/>
    </reaction>
</comment>
<comment type="cofactor">
    <cofactor evidence="1">
        <name>Mn(2+)</name>
        <dbReference type="ChEBI" id="CHEBI:29035"/>
    </cofactor>
    <cofactor evidence="1">
        <name>Mg(2+)</name>
        <dbReference type="ChEBI" id="CHEBI:18420"/>
    </cofactor>
    <text evidence="1">Manganese or magnesium. Binds 1 divalent metal ion per monomer in the absence of substrate. May bind a second metal ion after substrate binding.</text>
</comment>
<comment type="subcellular location">
    <subcellularLocation>
        <location evidence="1">Cytoplasm</location>
    </subcellularLocation>
</comment>
<comment type="similarity">
    <text evidence="1">Belongs to the RNase HII family. RnhC subfamily.</text>
</comment>
<protein>
    <recommendedName>
        <fullName evidence="1">Ribonuclease HIII</fullName>
        <shortName evidence="1">RNase HIII</shortName>
        <ecNumber evidence="1">3.1.26.4</ecNumber>
    </recommendedName>
</protein>
<accession>Q823W2</accession>
<gene>
    <name evidence="1" type="primary">rnhC</name>
    <name type="ordered locus">CCA_00293</name>
</gene>
<evidence type="ECO:0000255" key="1">
    <source>
        <dbReference type="HAMAP-Rule" id="MF_00053"/>
    </source>
</evidence>
<evidence type="ECO:0000255" key="2">
    <source>
        <dbReference type="PROSITE-ProRule" id="PRU01319"/>
    </source>
</evidence>